<reference key="1">
    <citation type="journal article" date="2003" name="Proc. Natl. Acad. Sci. U.S.A.">
        <title>Complete genome sequence of the marine planctomycete Pirellula sp. strain 1.</title>
        <authorList>
            <person name="Gloeckner F.O."/>
            <person name="Kube M."/>
            <person name="Bauer M."/>
            <person name="Teeling H."/>
            <person name="Lombardot T."/>
            <person name="Ludwig W."/>
            <person name="Gade D."/>
            <person name="Beck A."/>
            <person name="Borzym K."/>
            <person name="Heitmann K."/>
            <person name="Rabus R."/>
            <person name="Schlesner H."/>
            <person name="Amann R."/>
            <person name="Reinhardt R."/>
        </authorList>
    </citation>
    <scope>NUCLEOTIDE SEQUENCE [LARGE SCALE GENOMIC DNA]</scope>
    <source>
        <strain>DSM 10527 / NCIMB 13988 / SH1</strain>
    </source>
</reference>
<keyword id="KW-0067">ATP-binding</keyword>
<keyword id="KW-0997">Cell inner membrane</keyword>
<keyword id="KW-1003">Cell membrane</keyword>
<keyword id="KW-0963">Cytoplasm</keyword>
<keyword id="KW-0472">Membrane</keyword>
<keyword id="KW-0479">Metal-binding</keyword>
<keyword id="KW-0547">Nucleotide-binding</keyword>
<keyword id="KW-0653">Protein transport</keyword>
<keyword id="KW-1185">Reference proteome</keyword>
<keyword id="KW-1278">Translocase</keyword>
<keyword id="KW-0811">Translocation</keyword>
<keyword id="KW-0813">Transport</keyword>
<keyword id="KW-0862">Zinc</keyword>
<accession>Q7UDY6</accession>
<protein>
    <recommendedName>
        <fullName evidence="1">Protein translocase subunit SecA 1</fullName>
        <ecNumber evidence="1">7.4.2.8</ecNumber>
    </recommendedName>
</protein>
<name>SECA1_RHOBA</name>
<gene>
    <name evidence="1" type="primary">secA1</name>
    <name type="ordered locus">RB11690</name>
</gene>
<dbReference type="EC" id="7.4.2.8" evidence="1"/>
<dbReference type="EMBL" id="BX294153">
    <property type="protein sequence ID" value="CAD79269.1"/>
    <property type="molecule type" value="Genomic_DNA"/>
</dbReference>
<dbReference type="RefSeq" id="NP_870114.1">
    <property type="nucleotide sequence ID" value="NC_005027.1"/>
</dbReference>
<dbReference type="SMR" id="Q7UDY6"/>
<dbReference type="FunCoup" id="Q7UDY6">
    <property type="interactions" value="530"/>
</dbReference>
<dbReference type="STRING" id="243090.RB11690"/>
<dbReference type="EnsemblBacteria" id="CAD79269">
    <property type="protein sequence ID" value="CAD79269"/>
    <property type="gene ID" value="RB11690"/>
</dbReference>
<dbReference type="KEGG" id="rba:RB11690"/>
<dbReference type="PATRIC" id="fig|243090.15.peg.5665"/>
<dbReference type="eggNOG" id="COG0653">
    <property type="taxonomic scope" value="Bacteria"/>
</dbReference>
<dbReference type="HOGENOM" id="CLU_005314_1_0_0"/>
<dbReference type="InParanoid" id="Q7UDY6"/>
<dbReference type="OrthoDB" id="9805579at2"/>
<dbReference type="Proteomes" id="UP000001025">
    <property type="component" value="Chromosome"/>
</dbReference>
<dbReference type="GO" id="GO:0031522">
    <property type="term" value="C:cell envelope Sec protein transport complex"/>
    <property type="evidence" value="ECO:0000318"/>
    <property type="project" value="GO_Central"/>
</dbReference>
<dbReference type="GO" id="GO:0005737">
    <property type="term" value="C:cytoplasm"/>
    <property type="evidence" value="ECO:0007669"/>
    <property type="project" value="UniProtKB-SubCell"/>
</dbReference>
<dbReference type="GO" id="GO:0005886">
    <property type="term" value="C:plasma membrane"/>
    <property type="evidence" value="ECO:0000318"/>
    <property type="project" value="GO_Central"/>
</dbReference>
<dbReference type="GO" id="GO:0005524">
    <property type="term" value="F:ATP binding"/>
    <property type="evidence" value="ECO:0000318"/>
    <property type="project" value="GO_Central"/>
</dbReference>
<dbReference type="GO" id="GO:0046872">
    <property type="term" value="F:metal ion binding"/>
    <property type="evidence" value="ECO:0007669"/>
    <property type="project" value="UniProtKB-KW"/>
</dbReference>
<dbReference type="GO" id="GO:0008564">
    <property type="term" value="F:protein-exporting ATPase activity"/>
    <property type="evidence" value="ECO:0007669"/>
    <property type="project" value="UniProtKB-EC"/>
</dbReference>
<dbReference type="GO" id="GO:0065002">
    <property type="term" value="P:intracellular protein transmembrane transport"/>
    <property type="evidence" value="ECO:0007669"/>
    <property type="project" value="UniProtKB-UniRule"/>
</dbReference>
<dbReference type="GO" id="GO:0017038">
    <property type="term" value="P:protein import"/>
    <property type="evidence" value="ECO:0007669"/>
    <property type="project" value="InterPro"/>
</dbReference>
<dbReference type="GO" id="GO:0006605">
    <property type="term" value="P:protein targeting"/>
    <property type="evidence" value="ECO:0007669"/>
    <property type="project" value="UniProtKB-UniRule"/>
</dbReference>
<dbReference type="GO" id="GO:0043952">
    <property type="term" value="P:protein transport by the Sec complex"/>
    <property type="evidence" value="ECO:0000318"/>
    <property type="project" value="GO_Central"/>
</dbReference>
<dbReference type="CDD" id="cd17928">
    <property type="entry name" value="DEXDc_SecA"/>
    <property type="match status" value="1"/>
</dbReference>
<dbReference type="CDD" id="cd18803">
    <property type="entry name" value="SF2_C_secA"/>
    <property type="match status" value="1"/>
</dbReference>
<dbReference type="FunFam" id="3.90.1440.10:FF:000003">
    <property type="entry name" value="Preprotein translocase SecA subunit"/>
    <property type="match status" value="1"/>
</dbReference>
<dbReference type="FunFam" id="3.40.50.300:FF:000113">
    <property type="entry name" value="Preprotein translocase subunit SecA"/>
    <property type="match status" value="1"/>
</dbReference>
<dbReference type="Gene3D" id="3.10.450.50">
    <property type="match status" value="1"/>
</dbReference>
<dbReference type="Gene3D" id="1.10.3060.10">
    <property type="entry name" value="Helical scaffold and wing domains of SecA"/>
    <property type="match status" value="2"/>
</dbReference>
<dbReference type="Gene3D" id="3.40.50.300">
    <property type="entry name" value="P-loop containing nucleotide triphosphate hydrolases"/>
    <property type="match status" value="2"/>
</dbReference>
<dbReference type="Gene3D" id="3.90.1440.10">
    <property type="entry name" value="SecA, preprotein cross-linking domain"/>
    <property type="match status" value="1"/>
</dbReference>
<dbReference type="HAMAP" id="MF_01382">
    <property type="entry name" value="SecA"/>
    <property type="match status" value="1"/>
</dbReference>
<dbReference type="InterPro" id="IPR014001">
    <property type="entry name" value="Helicase_ATP-bd"/>
</dbReference>
<dbReference type="InterPro" id="IPR027417">
    <property type="entry name" value="P-loop_NTPase"/>
</dbReference>
<dbReference type="InterPro" id="IPR004027">
    <property type="entry name" value="SEC_C_motif"/>
</dbReference>
<dbReference type="InterPro" id="IPR000185">
    <property type="entry name" value="SecA"/>
</dbReference>
<dbReference type="InterPro" id="IPR020937">
    <property type="entry name" value="SecA_CS"/>
</dbReference>
<dbReference type="InterPro" id="IPR011115">
    <property type="entry name" value="SecA_DEAD"/>
</dbReference>
<dbReference type="InterPro" id="IPR014018">
    <property type="entry name" value="SecA_motor_DEAD"/>
</dbReference>
<dbReference type="InterPro" id="IPR011130">
    <property type="entry name" value="SecA_preprotein_X-link_dom"/>
</dbReference>
<dbReference type="InterPro" id="IPR044722">
    <property type="entry name" value="SecA_SF2_C"/>
</dbReference>
<dbReference type="InterPro" id="IPR011116">
    <property type="entry name" value="SecA_Wing/Scaffold"/>
</dbReference>
<dbReference type="InterPro" id="IPR036266">
    <property type="entry name" value="SecA_Wing/Scaffold_sf"/>
</dbReference>
<dbReference type="InterPro" id="IPR036670">
    <property type="entry name" value="SecA_X-link_sf"/>
</dbReference>
<dbReference type="PANTHER" id="PTHR30612:SF0">
    <property type="entry name" value="CHLOROPLAST PROTEIN-TRANSPORTING ATPASE"/>
    <property type="match status" value="1"/>
</dbReference>
<dbReference type="PANTHER" id="PTHR30612">
    <property type="entry name" value="SECA INNER MEMBRANE COMPONENT OF SEC PROTEIN SECRETION SYSTEM"/>
    <property type="match status" value="1"/>
</dbReference>
<dbReference type="Pfam" id="PF21090">
    <property type="entry name" value="P-loop_SecA"/>
    <property type="match status" value="1"/>
</dbReference>
<dbReference type="Pfam" id="PF02810">
    <property type="entry name" value="SEC-C"/>
    <property type="match status" value="1"/>
</dbReference>
<dbReference type="Pfam" id="PF07517">
    <property type="entry name" value="SecA_DEAD"/>
    <property type="match status" value="1"/>
</dbReference>
<dbReference type="Pfam" id="PF01043">
    <property type="entry name" value="SecA_PP_bind"/>
    <property type="match status" value="1"/>
</dbReference>
<dbReference type="Pfam" id="PF07516">
    <property type="entry name" value="SecA_SW"/>
    <property type="match status" value="2"/>
</dbReference>
<dbReference type="PRINTS" id="PR00906">
    <property type="entry name" value="SECA"/>
</dbReference>
<dbReference type="SMART" id="SM00957">
    <property type="entry name" value="SecA_DEAD"/>
    <property type="match status" value="1"/>
</dbReference>
<dbReference type="SMART" id="SM00958">
    <property type="entry name" value="SecA_PP_bind"/>
    <property type="match status" value="1"/>
</dbReference>
<dbReference type="SUPFAM" id="SSF81886">
    <property type="entry name" value="Helical scaffold and wing domains of SecA"/>
    <property type="match status" value="2"/>
</dbReference>
<dbReference type="SUPFAM" id="SSF52540">
    <property type="entry name" value="P-loop containing nucleoside triphosphate hydrolases"/>
    <property type="match status" value="2"/>
</dbReference>
<dbReference type="SUPFAM" id="SSF81767">
    <property type="entry name" value="Pre-protein crosslinking domain of SecA"/>
    <property type="match status" value="1"/>
</dbReference>
<dbReference type="PROSITE" id="PS01312">
    <property type="entry name" value="SECA"/>
    <property type="match status" value="1"/>
</dbReference>
<dbReference type="PROSITE" id="PS51196">
    <property type="entry name" value="SECA_MOTOR_DEAD"/>
    <property type="match status" value="1"/>
</dbReference>
<sequence>MSILERLWDLLGLVFGSTFERVGSLATSVFGSANARQVAKLQESADRITAMEPKFAAMSDEELRDQTVLFRKRLREGETLDDIMEEAFAVCREGGKRFLGMRHYDVQLIGGMVLHSGAIGEMVTGEGKTLVATLPAYLNALEAKGVHVITVNDYLARRDMEWMAPLYMNLGLTVDAIQSGMSTSEKQAAYQCDITYGTNNEFGFDYLRDNMRPAAKGDDRFPSEVQQCQGPLNYAIIDEVDNILIDEARTPLIISGPADLDLGRYGEADRVARQLKKEEHFTVDEKQHNVTLTDEGVRAAEELAGVESFYTAGNMEWPHLIDNALKAHYLYKLDVNYVVKDKQVVIVDEFTGRLMDGRQWSDGLHQAVEAKEGVPIKQETQTFATASLQNIFKMYKKLSGMTGTAMTEADEFWKIYKLDVVAIPTHRGLQRIEHPDLIYLTEKDKFKAIADDVERTHKWDVVVLKDGTEIWGNIKSETDSVVELLPKGEKQTESFSHEKIVAIERAGRPVLVGTVSIEKSERLSALLERRGIKHDVLNAKQHGREADIVSQAGRIGAVTIATNMAGRGTDIILGGNPETLAWSQLQHKYPTRLEVPDAEWKALVDEIDERENMSAEGKIVREIGGLYVLGTERHESRRIDLQLRGRCGRQGDPGGSRFFLSLEDDLMRIFAGDFVKSMMERMGMKEGEAIESSLVTRRIAAAQKKVEERNFEIRKSLLEYDEVMDEQRKRVYRYRQNLLDGHSSREMLLTLIHNEIQSQVETFLDPNYGVDTFSTFAGGKLGCQLDARDFQNMDFEMADTYAKDQAERASEVTVAEAVEENLPESMEDEWNWKAMATWANTHLGTNYQDHQLKNKDREEMIDELIAHAHKQIEETDLSEGEPLLEADYGLRVLCAWMRHKFGIETTPEEFRDVEDRRKVTEELNRRAEAAYTEKEAEYPVLTGISRFTDKQGAQVSLDREGLVDWVHGRFNHELSVDEVKLNRDDLKVQLIQYSKQTASASGGMHAQAAEKVEDLFGRADADVTASLASGQSGKLEALATWLQEELGNRNTAEDLSRMNRAELTLAVNGAVDDKFHPEMRRMERQILLNIVDDSWKNHLLTMDHLRSSVGLKGYAQMDPKVEYKREGMRLFESMWDSIGERVTDLIFRMESFNDDFIRSTWVDARTRHDDAHEAGRSAQQAAQMESNTAAQRAAAGSEGRAEGSVDTVRVEEPRIGRNAPCPCGSGKKYKSCCMRRDG</sequence>
<evidence type="ECO:0000255" key="1">
    <source>
        <dbReference type="HAMAP-Rule" id="MF_01382"/>
    </source>
</evidence>
<evidence type="ECO:0000256" key="2">
    <source>
        <dbReference type="SAM" id="MobiDB-lite"/>
    </source>
</evidence>
<feature type="chain" id="PRO_0000320919" description="Protein translocase subunit SecA 1">
    <location>
        <begin position="1"/>
        <end position="1238"/>
    </location>
</feature>
<feature type="region of interest" description="Disordered" evidence="2">
    <location>
        <begin position="1194"/>
        <end position="1220"/>
    </location>
</feature>
<feature type="compositionally biased region" description="Basic and acidic residues" evidence="2">
    <location>
        <begin position="1199"/>
        <end position="1215"/>
    </location>
</feature>
<feature type="binding site" evidence="1">
    <location>
        <position position="107"/>
    </location>
    <ligand>
        <name>ATP</name>
        <dbReference type="ChEBI" id="CHEBI:30616"/>
    </ligand>
</feature>
<feature type="binding site" evidence="1">
    <location>
        <begin position="125"/>
        <end position="129"/>
    </location>
    <ligand>
        <name>ATP</name>
        <dbReference type="ChEBI" id="CHEBI:30616"/>
    </ligand>
</feature>
<feature type="binding site" evidence="1">
    <location>
        <position position="570"/>
    </location>
    <ligand>
        <name>ATP</name>
        <dbReference type="ChEBI" id="CHEBI:30616"/>
    </ligand>
</feature>
<feature type="binding site" evidence="1">
    <location>
        <position position="1221"/>
    </location>
    <ligand>
        <name>Zn(2+)</name>
        <dbReference type="ChEBI" id="CHEBI:29105"/>
    </ligand>
</feature>
<feature type="binding site" evidence="1">
    <location>
        <position position="1223"/>
    </location>
    <ligand>
        <name>Zn(2+)</name>
        <dbReference type="ChEBI" id="CHEBI:29105"/>
    </ligand>
</feature>
<feature type="binding site" evidence="1">
    <location>
        <position position="1232"/>
    </location>
    <ligand>
        <name>Zn(2+)</name>
        <dbReference type="ChEBI" id="CHEBI:29105"/>
    </ligand>
</feature>
<feature type="binding site" evidence="1">
    <location>
        <position position="1233"/>
    </location>
    <ligand>
        <name>Zn(2+)</name>
        <dbReference type="ChEBI" id="CHEBI:29105"/>
    </ligand>
</feature>
<organism>
    <name type="scientific">Rhodopirellula baltica (strain DSM 10527 / NCIMB 13988 / SH1)</name>
    <dbReference type="NCBI Taxonomy" id="243090"/>
    <lineage>
        <taxon>Bacteria</taxon>
        <taxon>Pseudomonadati</taxon>
        <taxon>Planctomycetota</taxon>
        <taxon>Planctomycetia</taxon>
        <taxon>Pirellulales</taxon>
        <taxon>Pirellulaceae</taxon>
        <taxon>Rhodopirellula</taxon>
    </lineage>
</organism>
<comment type="function">
    <text evidence="1">Part of the Sec protein translocase complex. Interacts with the SecYEG preprotein conducting channel. Has a central role in coupling the hydrolysis of ATP to the transfer of proteins into and across the cell membrane, serving as an ATP-driven molecular motor driving the stepwise translocation of polypeptide chains across the membrane.</text>
</comment>
<comment type="catalytic activity">
    <reaction evidence="1">
        <text>ATP + H2O + cellular proteinSide 1 = ADP + phosphate + cellular proteinSide 2.</text>
        <dbReference type="EC" id="7.4.2.8"/>
    </reaction>
</comment>
<comment type="cofactor">
    <cofactor evidence="1">
        <name>Zn(2+)</name>
        <dbReference type="ChEBI" id="CHEBI:29105"/>
    </cofactor>
    <text evidence="1">May bind 1 zinc ion per subunit.</text>
</comment>
<comment type="subunit">
    <text evidence="1">Monomer and homodimer. Part of the essential Sec protein translocation apparatus which comprises SecA, SecYEG and auxiliary proteins SecDF. Other proteins may also be involved.</text>
</comment>
<comment type="subcellular location">
    <subcellularLocation>
        <location evidence="1">Cell inner membrane</location>
        <topology evidence="1">Peripheral membrane protein</topology>
        <orientation evidence="1">Cytoplasmic side</orientation>
    </subcellularLocation>
    <subcellularLocation>
        <location evidence="1">Cytoplasm</location>
    </subcellularLocation>
    <text evidence="1">Distribution is 50-50.</text>
</comment>
<comment type="similarity">
    <text evidence="1">Belongs to the SecA family.</text>
</comment>
<proteinExistence type="inferred from homology"/>